<sequence length="320" mass="35451">MRSAQVYRWQIPMDAGVVLRDRRLKTRDGLYVCLREGEREGWGEISPLPGFSQETWEDAQSVLLAWVNNWLAGDCEIPQMPSVAFGVSCALAELAETLPQAANYRAAPLCNGDPDDLILKLADMPGEKVAKVKVGLYEAVRDGMVVNLLLEAIPDLHLRLDANRAWTPLKGQQFAKYVNPDYRHRIAFLEEPCKTRDDSRAFARETGIAIAWDESLREPDFAFVAEEGVRAVVIKPTLTGSLDKVREQVQAAHALGLTAVISSSIESSLGLTQLARIAAWLTPDTIPGLDTLDLMQAQQVRRWPGSPLPLVDVDALERLL</sequence>
<comment type="function">
    <text evidence="1">Converts 2-succinyl-6-hydroxy-2,4-cyclohexadiene-1-carboxylate (SHCHC) to 2-succinylbenzoate (OSB).</text>
</comment>
<comment type="catalytic activity">
    <reaction evidence="1">
        <text>(1R,6R)-6-hydroxy-2-succinyl-cyclohexa-2,4-diene-1-carboxylate = 2-succinylbenzoate + H2O</text>
        <dbReference type="Rhea" id="RHEA:10196"/>
        <dbReference type="ChEBI" id="CHEBI:15377"/>
        <dbReference type="ChEBI" id="CHEBI:18325"/>
        <dbReference type="ChEBI" id="CHEBI:58689"/>
        <dbReference type="EC" id="4.2.1.113"/>
    </reaction>
</comment>
<comment type="cofactor">
    <cofactor evidence="1">
        <name>a divalent metal cation</name>
        <dbReference type="ChEBI" id="CHEBI:60240"/>
    </cofactor>
</comment>
<comment type="pathway">
    <text evidence="1">Quinol/quinone metabolism; 1,4-dihydroxy-2-naphthoate biosynthesis; 1,4-dihydroxy-2-naphthoate from chorismate: step 4/7.</text>
</comment>
<comment type="pathway">
    <text evidence="1">Quinol/quinone metabolism; menaquinone biosynthesis.</text>
</comment>
<comment type="similarity">
    <text evidence="1">Belongs to the mandelate racemase/muconate lactonizing enzyme family. MenC type 1 subfamily.</text>
</comment>
<organism>
    <name type="scientific">Escherichia coli O45:K1 (strain S88 / ExPEC)</name>
    <dbReference type="NCBI Taxonomy" id="585035"/>
    <lineage>
        <taxon>Bacteria</taxon>
        <taxon>Pseudomonadati</taxon>
        <taxon>Pseudomonadota</taxon>
        <taxon>Gammaproteobacteria</taxon>
        <taxon>Enterobacterales</taxon>
        <taxon>Enterobacteriaceae</taxon>
        <taxon>Escherichia</taxon>
    </lineage>
</organism>
<keyword id="KW-0456">Lyase</keyword>
<keyword id="KW-0460">Magnesium</keyword>
<keyword id="KW-0474">Menaquinone biosynthesis</keyword>
<keyword id="KW-0479">Metal-binding</keyword>
<keyword id="KW-1185">Reference proteome</keyword>
<dbReference type="EC" id="4.2.1.113" evidence="1"/>
<dbReference type="EMBL" id="CU928161">
    <property type="protein sequence ID" value="CAR03691.1"/>
    <property type="molecule type" value="Genomic_DNA"/>
</dbReference>
<dbReference type="RefSeq" id="WP_001255587.1">
    <property type="nucleotide sequence ID" value="NC_011742.1"/>
</dbReference>
<dbReference type="SMR" id="B7MG29"/>
<dbReference type="KEGG" id="ecz:ECS88_2412"/>
<dbReference type="HOGENOM" id="CLU_030273_0_1_6"/>
<dbReference type="UniPathway" id="UPA00079"/>
<dbReference type="UniPathway" id="UPA01057">
    <property type="reaction ID" value="UER00165"/>
</dbReference>
<dbReference type="Proteomes" id="UP000000747">
    <property type="component" value="Chromosome"/>
</dbReference>
<dbReference type="GO" id="GO:0000287">
    <property type="term" value="F:magnesium ion binding"/>
    <property type="evidence" value="ECO:0007669"/>
    <property type="project" value="UniProtKB-UniRule"/>
</dbReference>
<dbReference type="GO" id="GO:0043748">
    <property type="term" value="F:O-succinylbenzoate synthase activity"/>
    <property type="evidence" value="ECO:0007669"/>
    <property type="project" value="UniProtKB-EC"/>
</dbReference>
<dbReference type="GO" id="GO:0009234">
    <property type="term" value="P:menaquinone biosynthetic process"/>
    <property type="evidence" value="ECO:0007669"/>
    <property type="project" value="UniProtKB-UniRule"/>
</dbReference>
<dbReference type="CDD" id="cd03320">
    <property type="entry name" value="OSBS"/>
    <property type="match status" value="1"/>
</dbReference>
<dbReference type="FunFam" id="3.20.20.120:FF:000006">
    <property type="entry name" value="o-succinylbenzoate synthase"/>
    <property type="match status" value="1"/>
</dbReference>
<dbReference type="FunFam" id="3.30.390.10:FF:000005">
    <property type="entry name" value="o-succinylbenzoate synthase"/>
    <property type="match status" value="1"/>
</dbReference>
<dbReference type="Gene3D" id="3.20.20.120">
    <property type="entry name" value="Enolase-like C-terminal domain"/>
    <property type="match status" value="1"/>
</dbReference>
<dbReference type="Gene3D" id="3.30.390.10">
    <property type="entry name" value="Enolase-like, N-terminal domain"/>
    <property type="match status" value="1"/>
</dbReference>
<dbReference type="HAMAP" id="MF_00470">
    <property type="entry name" value="MenC_1"/>
    <property type="match status" value="1"/>
</dbReference>
<dbReference type="InterPro" id="IPR036849">
    <property type="entry name" value="Enolase-like_C_sf"/>
</dbReference>
<dbReference type="InterPro" id="IPR029017">
    <property type="entry name" value="Enolase-like_N"/>
</dbReference>
<dbReference type="InterPro" id="IPR029065">
    <property type="entry name" value="Enolase_C-like"/>
</dbReference>
<dbReference type="InterPro" id="IPR013342">
    <property type="entry name" value="Mandelate_racemase_C"/>
</dbReference>
<dbReference type="InterPro" id="IPR010196">
    <property type="entry name" value="OSB_synthase_MenC1"/>
</dbReference>
<dbReference type="InterPro" id="IPR041338">
    <property type="entry name" value="OSBS_N"/>
</dbReference>
<dbReference type="NCBIfam" id="TIGR01927">
    <property type="entry name" value="menC_gam_Gplu"/>
    <property type="match status" value="1"/>
</dbReference>
<dbReference type="NCBIfam" id="NF003473">
    <property type="entry name" value="PRK05105.1"/>
    <property type="match status" value="1"/>
</dbReference>
<dbReference type="PANTHER" id="PTHR48073:SF2">
    <property type="entry name" value="O-SUCCINYLBENZOATE SYNTHASE"/>
    <property type="match status" value="1"/>
</dbReference>
<dbReference type="PANTHER" id="PTHR48073">
    <property type="entry name" value="O-SUCCINYLBENZOATE SYNTHASE-RELATED"/>
    <property type="match status" value="1"/>
</dbReference>
<dbReference type="Pfam" id="PF21508">
    <property type="entry name" value="MenC_N"/>
    <property type="match status" value="1"/>
</dbReference>
<dbReference type="Pfam" id="PF13378">
    <property type="entry name" value="MR_MLE_C"/>
    <property type="match status" value="1"/>
</dbReference>
<dbReference type="SFLD" id="SFLDS00001">
    <property type="entry name" value="Enolase"/>
    <property type="match status" value="1"/>
</dbReference>
<dbReference type="SFLD" id="SFLDF00009">
    <property type="entry name" value="o-succinylbenzoate_synthase"/>
    <property type="match status" value="1"/>
</dbReference>
<dbReference type="SMART" id="SM00922">
    <property type="entry name" value="MR_MLE"/>
    <property type="match status" value="1"/>
</dbReference>
<dbReference type="SUPFAM" id="SSF51604">
    <property type="entry name" value="Enolase C-terminal domain-like"/>
    <property type="match status" value="1"/>
</dbReference>
<dbReference type="SUPFAM" id="SSF54826">
    <property type="entry name" value="Enolase N-terminal domain-like"/>
    <property type="match status" value="1"/>
</dbReference>
<gene>
    <name evidence="1" type="primary">menC</name>
    <name type="ordered locus">ECS88_2412</name>
</gene>
<name>MENC_ECO45</name>
<evidence type="ECO:0000255" key="1">
    <source>
        <dbReference type="HAMAP-Rule" id="MF_00470"/>
    </source>
</evidence>
<feature type="chain" id="PRO_1000125566" description="o-succinylbenzoate synthase">
    <location>
        <begin position="1"/>
        <end position="320"/>
    </location>
</feature>
<feature type="active site" description="Proton donor" evidence="1">
    <location>
        <position position="133"/>
    </location>
</feature>
<feature type="active site" description="Proton acceptor" evidence="1">
    <location>
        <position position="235"/>
    </location>
</feature>
<feature type="binding site" evidence="1">
    <location>
        <position position="161"/>
    </location>
    <ligand>
        <name>Mg(2+)</name>
        <dbReference type="ChEBI" id="CHEBI:18420"/>
    </ligand>
</feature>
<feature type="binding site" evidence="1">
    <location>
        <position position="190"/>
    </location>
    <ligand>
        <name>Mg(2+)</name>
        <dbReference type="ChEBI" id="CHEBI:18420"/>
    </ligand>
</feature>
<feature type="binding site" evidence="1">
    <location>
        <position position="213"/>
    </location>
    <ligand>
        <name>Mg(2+)</name>
        <dbReference type="ChEBI" id="CHEBI:18420"/>
    </ligand>
</feature>
<protein>
    <recommendedName>
        <fullName evidence="1">o-succinylbenzoate synthase</fullName>
        <shortName evidence="1">OSB synthase</shortName>
        <shortName evidence="1">OSBS</shortName>
        <ecNumber evidence="1">4.2.1.113</ecNumber>
    </recommendedName>
    <alternativeName>
        <fullName evidence="1">4-(2'-carboxyphenyl)-4-oxybutyric acid synthase</fullName>
    </alternativeName>
    <alternativeName>
        <fullName evidence="1">o-succinylbenzoic acid synthase</fullName>
    </alternativeName>
</protein>
<reference key="1">
    <citation type="journal article" date="2009" name="PLoS Genet.">
        <title>Organised genome dynamics in the Escherichia coli species results in highly diverse adaptive paths.</title>
        <authorList>
            <person name="Touchon M."/>
            <person name="Hoede C."/>
            <person name="Tenaillon O."/>
            <person name="Barbe V."/>
            <person name="Baeriswyl S."/>
            <person name="Bidet P."/>
            <person name="Bingen E."/>
            <person name="Bonacorsi S."/>
            <person name="Bouchier C."/>
            <person name="Bouvet O."/>
            <person name="Calteau A."/>
            <person name="Chiapello H."/>
            <person name="Clermont O."/>
            <person name="Cruveiller S."/>
            <person name="Danchin A."/>
            <person name="Diard M."/>
            <person name="Dossat C."/>
            <person name="Karoui M.E."/>
            <person name="Frapy E."/>
            <person name="Garry L."/>
            <person name="Ghigo J.M."/>
            <person name="Gilles A.M."/>
            <person name="Johnson J."/>
            <person name="Le Bouguenec C."/>
            <person name="Lescat M."/>
            <person name="Mangenot S."/>
            <person name="Martinez-Jehanne V."/>
            <person name="Matic I."/>
            <person name="Nassif X."/>
            <person name="Oztas S."/>
            <person name="Petit M.A."/>
            <person name="Pichon C."/>
            <person name="Rouy Z."/>
            <person name="Ruf C.S."/>
            <person name="Schneider D."/>
            <person name="Tourret J."/>
            <person name="Vacherie B."/>
            <person name="Vallenet D."/>
            <person name="Medigue C."/>
            <person name="Rocha E.P.C."/>
            <person name="Denamur E."/>
        </authorList>
    </citation>
    <scope>NUCLEOTIDE SEQUENCE [LARGE SCALE GENOMIC DNA]</scope>
    <source>
        <strain>S88 / ExPEC</strain>
    </source>
</reference>
<accession>B7MG29</accession>
<proteinExistence type="inferred from homology"/>